<organism>
    <name type="scientific">Legionella pneumophila</name>
    <dbReference type="NCBI Taxonomy" id="446"/>
    <lineage>
        <taxon>Bacteria</taxon>
        <taxon>Pseudomonadati</taxon>
        <taxon>Pseudomonadota</taxon>
        <taxon>Gammaproteobacteria</taxon>
        <taxon>Legionellales</taxon>
        <taxon>Legionellaceae</taxon>
        <taxon>Legionella</taxon>
    </lineage>
</organism>
<sequence>MKRLISCLTIICALNRSAAAETTSSPCSRWISLLKPVCQRIHQTWTEGHDDMYFSGYAWHNRYTYRPEKIKSYNEAAWGGGLGKSLFDEKGNWHGLYAIAFLDSHRHIEPAVGYAYLKTASVNKDIKAGLGYSVLVTSRVDYDNVPFPGALPWVALFYKRTTVAATYIPGSAGAGNVLYILGKISL</sequence>
<accession>Q93K12</accession>
<reference key="1">
    <citation type="journal article" date="1996" name="Infect. Immun.">
        <title>A Legionella pneumophila gene that promotes hemin binding.</title>
        <authorList>
            <person name="O'Connell W.A."/>
            <person name="Hickey E.K."/>
            <person name="Cianciotto N.P."/>
        </authorList>
    </citation>
    <scope>NUCLEOTIDE SEQUENCE [GENOMIC DNA]</scope>
    <source>
        <strain>130b / Wadsworth / Serogroup 1</strain>
    </source>
</reference>
<reference key="2">
    <citation type="journal article" date="2001" name="Infect. Immun.">
        <title>Identification of Legionella pneumophila rcp, a pagP-like gene that confers resistance to cationic antimicrobial peptides and promotes intracellular infection.</title>
        <authorList>
            <person name="Robey M."/>
            <person name="O'Connell W."/>
            <person name="Cianciotto N.P."/>
        </authorList>
    </citation>
    <scope>NUCLEOTIDE SEQUENCE [GENOMIC DNA]</scope>
    <scope>FUNCTION IN CAMP RESISTANCE</scope>
    <scope>NOMENCLATURE</scope>
    <scope>DISRUPTION PHENOTYPE</scope>
    <source>
        <strain>130b / Wadsworth / Serogroup 1</strain>
    </source>
</reference>
<comment type="function">
    <text evidence="1 2">Transfers a fatty acid residue from the sn-1 position of a phospholipid to the N-linked hydroxyfatty acid chain on the proximal unit of lipid A or its precursors (By similarity). Confers resistance to cationic antimicrobial peptides (CAMPs). Promotes the ability of L.pneumophila to replicate and/or survive in macrophages. Important for ability to kill macrophages and to promote the virulence (PubMed:11401964).</text>
</comment>
<comment type="catalytic activity">
    <reaction evidence="1">
        <text>a lipid A + a 1,2-diacyl-sn-glycero-3-phosphocholine = a hepta-acyl lipid A + a 2-acyl-sn-glycero-3-phosphocholine</text>
        <dbReference type="Rhea" id="RHEA:74275"/>
        <dbReference type="ChEBI" id="CHEBI:57643"/>
        <dbReference type="ChEBI" id="CHEBI:57875"/>
        <dbReference type="ChEBI" id="CHEBI:193141"/>
        <dbReference type="ChEBI" id="CHEBI:193142"/>
        <dbReference type="EC" id="2.3.1.251"/>
    </reaction>
</comment>
<comment type="catalytic activity">
    <reaction evidence="1">
        <text>a lipid IVA + a 1,2-diacyl-sn-glycero-3-phosphocholine = a lipid IVB + a 2-acyl-sn-glycero-3-phosphocholine</text>
        <dbReference type="Rhea" id="RHEA:74279"/>
        <dbReference type="ChEBI" id="CHEBI:57643"/>
        <dbReference type="ChEBI" id="CHEBI:57875"/>
        <dbReference type="ChEBI" id="CHEBI:176425"/>
        <dbReference type="ChEBI" id="CHEBI:193143"/>
        <dbReference type="EC" id="2.3.1.251"/>
    </reaction>
</comment>
<comment type="catalytic activity">
    <reaction evidence="1">
        <text>a lipid IIA + a 1,2-diacyl-sn-glycero-3-phosphocholine = a lipid IIB + a 2-acyl-sn-glycero-3-phosphocholine</text>
        <dbReference type="Rhea" id="RHEA:74283"/>
        <dbReference type="ChEBI" id="CHEBI:57643"/>
        <dbReference type="ChEBI" id="CHEBI:57875"/>
        <dbReference type="ChEBI" id="CHEBI:193144"/>
        <dbReference type="ChEBI" id="CHEBI:193145"/>
        <dbReference type="EC" id="2.3.1.251"/>
    </reaction>
</comment>
<comment type="subunit">
    <text evidence="1 4">Homodimer.</text>
</comment>
<comment type="subcellular location">
    <subcellularLocation>
        <location evidence="1">Cell outer membrane</location>
    </subcellularLocation>
</comment>
<comment type="disruption phenotype">
    <text evidence="2">Mutant is impaired in stationary-phase survival in low-Mg(2+) medium and shows decreased resistance to different structural classes of CAMPs compared to the wild type. Mutations reduce both the numbers of bacteria recovered during intracellular infection and their cytopathic capacity for U937 macrophages. The mutant is also more defective for lung colonization of A/J mice.</text>
</comment>
<comment type="similarity">
    <text evidence="1 4">Belongs to the lipid A palmitoyltransferase family.</text>
</comment>
<name>PAGP_LEGPN</name>
<gene>
    <name evidence="1" type="primary">pagP</name>
    <name evidence="3" type="synonym">rcp</name>
</gene>
<feature type="signal peptide" evidence="1">
    <location>
        <begin position="1"/>
        <end position="19"/>
    </location>
</feature>
<feature type="chain" id="PRO_0000414458" description="Lipid A acyltransferase PagP">
    <location>
        <begin position="20"/>
        <end position="186"/>
    </location>
</feature>
<feature type="active site" evidence="1">
    <location>
        <position position="60"/>
    </location>
</feature>
<feature type="active site" evidence="1">
    <location>
        <position position="103"/>
    </location>
</feature>
<feature type="active site" evidence="1">
    <location>
        <position position="104"/>
    </location>
</feature>
<feature type="site" description="Role in lipopolysaccharide recognition" evidence="1">
    <location>
        <position position="69"/>
    </location>
</feature>
<proteinExistence type="evidence at protein level"/>
<dbReference type="EC" id="2.3.1.251" evidence="1"/>
<dbReference type="EMBL" id="U43385">
    <property type="protein sequence ID" value="AAK52070.1"/>
    <property type="molecule type" value="Genomic_DNA"/>
</dbReference>
<dbReference type="SMR" id="Q93K12"/>
<dbReference type="STRING" id="91892.BIZ52_00125"/>
<dbReference type="GO" id="GO:0009279">
    <property type="term" value="C:cell outer membrane"/>
    <property type="evidence" value="ECO:0000250"/>
    <property type="project" value="UniProtKB"/>
</dbReference>
<dbReference type="GO" id="GO:0016416">
    <property type="term" value="F:O-palmitoyltransferase activity"/>
    <property type="evidence" value="ECO:0000250"/>
    <property type="project" value="UniProtKB"/>
</dbReference>
<dbReference type="GO" id="GO:0009245">
    <property type="term" value="P:lipid A biosynthetic process"/>
    <property type="evidence" value="ECO:0000250"/>
    <property type="project" value="UniProtKB"/>
</dbReference>
<dbReference type="GO" id="GO:0141179">
    <property type="term" value="P:symbiont-mediated evasion of recognition by host antimicrobial peptide"/>
    <property type="evidence" value="ECO:0000269"/>
    <property type="project" value="SigSci"/>
</dbReference>
<dbReference type="Gene3D" id="2.40.160.20">
    <property type="match status" value="1"/>
</dbReference>
<dbReference type="HAMAP" id="MF_00837">
    <property type="entry name" value="PagP_transferase"/>
    <property type="match status" value="1"/>
</dbReference>
<dbReference type="InterPro" id="IPR009746">
    <property type="entry name" value="LipidA_acyl_PagP"/>
</dbReference>
<dbReference type="InterPro" id="IPR011250">
    <property type="entry name" value="OMP/PagP_b-brl"/>
</dbReference>
<dbReference type="NCBIfam" id="NF008271">
    <property type="entry name" value="PRK11045.1"/>
    <property type="match status" value="1"/>
</dbReference>
<dbReference type="Pfam" id="PF07017">
    <property type="entry name" value="PagP"/>
    <property type="match status" value="1"/>
</dbReference>
<dbReference type="SUPFAM" id="SSF56925">
    <property type="entry name" value="OMPA-like"/>
    <property type="match status" value="1"/>
</dbReference>
<evidence type="ECO:0000255" key="1">
    <source>
        <dbReference type="HAMAP-Rule" id="MF_00837"/>
    </source>
</evidence>
<evidence type="ECO:0000269" key="2">
    <source>
    </source>
</evidence>
<evidence type="ECO:0000303" key="3">
    <source>
    </source>
</evidence>
<evidence type="ECO:0000305" key="4"/>
<keyword id="KW-0012">Acyltransferase</keyword>
<keyword id="KW-0998">Cell outer membrane</keyword>
<keyword id="KW-0472">Membrane</keyword>
<keyword id="KW-0732">Signal</keyword>
<keyword id="KW-0808">Transferase</keyword>
<keyword id="KW-0843">Virulence</keyword>
<protein>
    <recommendedName>
        <fullName evidence="1">Lipid A acyltransferase PagP</fullName>
        <ecNumber evidence="1">2.3.1.251</ecNumber>
    </recommendedName>
    <alternativeName>
        <fullName evidence="1">Lipid A acylation protein</fullName>
    </alternativeName>
</protein>